<comment type="similarity">
    <text evidence="1">Belongs to the bacterial ribosomal protein bS16 family.</text>
</comment>
<accession>A8FLD9</accession>
<protein>
    <recommendedName>
        <fullName evidence="1">Small ribosomal subunit protein bS16</fullName>
    </recommendedName>
    <alternativeName>
        <fullName evidence="2">30S ribosomal protein S16</fullName>
    </alternativeName>
</protein>
<dbReference type="EMBL" id="CP000814">
    <property type="protein sequence ID" value="ABV52276.1"/>
    <property type="molecule type" value="Genomic_DNA"/>
</dbReference>
<dbReference type="RefSeq" id="WP_002852274.1">
    <property type="nucleotide sequence ID" value="NC_009839.1"/>
</dbReference>
<dbReference type="SMR" id="A8FLD9"/>
<dbReference type="KEGG" id="cju:C8J_0677"/>
<dbReference type="HOGENOM" id="CLU_100590_5_1_7"/>
<dbReference type="GO" id="GO:0005737">
    <property type="term" value="C:cytoplasm"/>
    <property type="evidence" value="ECO:0007669"/>
    <property type="project" value="UniProtKB-ARBA"/>
</dbReference>
<dbReference type="GO" id="GO:0015935">
    <property type="term" value="C:small ribosomal subunit"/>
    <property type="evidence" value="ECO:0007669"/>
    <property type="project" value="TreeGrafter"/>
</dbReference>
<dbReference type="GO" id="GO:0003735">
    <property type="term" value="F:structural constituent of ribosome"/>
    <property type="evidence" value="ECO:0007669"/>
    <property type="project" value="InterPro"/>
</dbReference>
<dbReference type="GO" id="GO:0006412">
    <property type="term" value="P:translation"/>
    <property type="evidence" value="ECO:0007669"/>
    <property type="project" value="UniProtKB-UniRule"/>
</dbReference>
<dbReference type="FunFam" id="3.30.1320.10:FF:000005">
    <property type="entry name" value="30S ribosomal protein S16"/>
    <property type="match status" value="1"/>
</dbReference>
<dbReference type="Gene3D" id="3.30.1320.10">
    <property type="match status" value="1"/>
</dbReference>
<dbReference type="HAMAP" id="MF_00385">
    <property type="entry name" value="Ribosomal_bS16"/>
    <property type="match status" value="1"/>
</dbReference>
<dbReference type="InterPro" id="IPR000307">
    <property type="entry name" value="Ribosomal_bS16"/>
</dbReference>
<dbReference type="InterPro" id="IPR020592">
    <property type="entry name" value="Ribosomal_bS16_CS"/>
</dbReference>
<dbReference type="InterPro" id="IPR023803">
    <property type="entry name" value="Ribosomal_bS16_dom_sf"/>
</dbReference>
<dbReference type="NCBIfam" id="TIGR00002">
    <property type="entry name" value="S16"/>
    <property type="match status" value="1"/>
</dbReference>
<dbReference type="PANTHER" id="PTHR12919">
    <property type="entry name" value="30S RIBOSOMAL PROTEIN S16"/>
    <property type="match status" value="1"/>
</dbReference>
<dbReference type="PANTHER" id="PTHR12919:SF20">
    <property type="entry name" value="SMALL RIBOSOMAL SUBUNIT PROTEIN BS16M"/>
    <property type="match status" value="1"/>
</dbReference>
<dbReference type="Pfam" id="PF00886">
    <property type="entry name" value="Ribosomal_S16"/>
    <property type="match status" value="1"/>
</dbReference>
<dbReference type="SUPFAM" id="SSF54565">
    <property type="entry name" value="Ribosomal protein S16"/>
    <property type="match status" value="1"/>
</dbReference>
<dbReference type="PROSITE" id="PS00732">
    <property type="entry name" value="RIBOSOMAL_S16"/>
    <property type="match status" value="1"/>
</dbReference>
<reference key="1">
    <citation type="journal article" date="2007" name="J. Bacteriol.">
        <title>The complete genome sequence of Campylobacter jejuni strain 81116 (NCTC11828).</title>
        <authorList>
            <person name="Pearson B.M."/>
            <person name="Gaskin D.J.H."/>
            <person name="Segers R.P.A.M."/>
            <person name="Wells J.M."/>
            <person name="Nuijten P.J.M."/>
            <person name="van Vliet A.H.M."/>
        </authorList>
    </citation>
    <scope>NUCLEOTIDE SEQUENCE [LARGE SCALE GENOMIC DNA]</scope>
    <source>
        <strain>81116 / NCTC 11828</strain>
    </source>
</reference>
<proteinExistence type="inferred from homology"/>
<organism>
    <name type="scientific">Campylobacter jejuni subsp. jejuni serotype O:6 (strain 81116 / NCTC 11828)</name>
    <dbReference type="NCBI Taxonomy" id="407148"/>
    <lineage>
        <taxon>Bacteria</taxon>
        <taxon>Pseudomonadati</taxon>
        <taxon>Campylobacterota</taxon>
        <taxon>Epsilonproteobacteria</taxon>
        <taxon>Campylobacterales</taxon>
        <taxon>Campylobacteraceae</taxon>
        <taxon>Campylobacter</taxon>
    </lineage>
</organism>
<sequence>MTVIRLTRMGRTKRPFYRIVVTDSRKRRDGGWIESIGYYNPMVEPEVIKVDAERLAYWKSVGAKLSDKVASITSK</sequence>
<feature type="chain" id="PRO_1000072193" description="Small ribosomal subunit protein bS16">
    <location>
        <begin position="1"/>
        <end position="75"/>
    </location>
</feature>
<gene>
    <name evidence="1" type="primary">rpsP</name>
    <name type="ordered locus">C8J_0677</name>
</gene>
<keyword id="KW-0687">Ribonucleoprotein</keyword>
<keyword id="KW-0689">Ribosomal protein</keyword>
<evidence type="ECO:0000255" key="1">
    <source>
        <dbReference type="HAMAP-Rule" id="MF_00385"/>
    </source>
</evidence>
<evidence type="ECO:0000305" key="2"/>
<name>RS16_CAMJ8</name>